<gene>
    <name type="primary">PLAC8</name>
    <name type="ORF">BM-004</name>
</gene>
<dbReference type="EMBL" id="AJ422147">
    <property type="protein sequence ID" value="CAD19530.1"/>
    <property type="molecule type" value="mRNA"/>
</dbReference>
<dbReference type="EMBL" id="FJ795024">
    <property type="protein sequence ID" value="ACO37643.1"/>
    <property type="molecule type" value="mRNA"/>
</dbReference>
<dbReference type="EMBL" id="AF208846">
    <property type="protein sequence ID" value="AAF64260.1"/>
    <property type="molecule type" value="mRNA"/>
</dbReference>
<dbReference type="EMBL" id="CH471057">
    <property type="protein sequence ID" value="EAX05923.1"/>
    <property type="molecule type" value="Genomic_DNA"/>
</dbReference>
<dbReference type="CCDS" id="CCDS3601.1"/>
<dbReference type="RefSeq" id="NP_001124187.1">
    <property type="nucleotide sequence ID" value="NM_001130715.2"/>
</dbReference>
<dbReference type="RefSeq" id="NP_001124188.1">
    <property type="nucleotide sequence ID" value="NM_001130716.2"/>
</dbReference>
<dbReference type="RefSeq" id="NP_057703.1">
    <property type="nucleotide sequence ID" value="NM_016619.3"/>
</dbReference>
<dbReference type="BioGRID" id="119467">
    <property type="interactions" value="26"/>
</dbReference>
<dbReference type="FunCoup" id="Q9NZF1">
    <property type="interactions" value="20"/>
</dbReference>
<dbReference type="IntAct" id="Q9NZF1">
    <property type="interactions" value="2"/>
</dbReference>
<dbReference type="STRING" id="9606.ENSP00000399700"/>
<dbReference type="PhosphoSitePlus" id="Q9NZF1"/>
<dbReference type="BioMuta" id="PLAC8"/>
<dbReference type="DMDM" id="34922849"/>
<dbReference type="MassIVE" id="Q9NZF1"/>
<dbReference type="PaxDb" id="9606-ENSP00000399700"/>
<dbReference type="PeptideAtlas" id="Q9NZF1"/>
<dbReference type="ProteomicsDB" id="83383"/>
<dbReference type="Pumba" id="Q9NZF1"/>
<dbReference type="Antibodypedia" id="52449">
    <property type="antibodies" value="63 antibodies from 17 providers"/>
</dbReference>
<dbReference type="DNASU" id="51316"/>
<dbReference type="Ensembl" id="ENST00000311507.9">
    <property type="protein sequence ID" value="ENSP00000309509.4"/>
    <property type="gene ID" value="ENSG00000145287.12"/>
</dbReference>
<dbReference type="Ensembl" id="ENST00000411416.7">
    <property type="protein sequence ID" value="ENSP00000412230.2"/>
    <property type="gene ID" value="ENSG00000145287.12"/>
</dbReference>
<dbReference type="Ensembl" id="ENST00000426923.3">
    <property type="protein sequence ID" value="ENSP00000399700.2"/>
    <property type="gene ID" value="ENSG00000145287.12"/>
</dbReference>
<dbReference type="Ensembl" id="ENST00000505406.5">
    <property type="protein sequence ID" value="ENSP00000422526.1"/>
    <property type="gene ID" value="ENSG00000145287.12"/>
</dbReference>
<dbReference type="Ensembl" id="ENST00000718322.1">
    <property type="protein sequence ID" value="ENSP00000520757.1"/>
    <property type="gene ID" value="ENSG00000145287.12"/>
</dbReference>
<dbReference type="Ensembl" id="ENST00000718323.1">
    <property type="protein sequence ID" value="ENSP00000520758.1"/>
    <property type="gene ID" value="ENSG00000145287.12"/>
</dbReference>
<dbReference type="Ensembl" id="ENST00000718328.1">
    <property type="protein sequence ID" value="ENSP00000520763.1"/>
    <property type="gene ID" value="ENSG00000145287.12"/>
</dbReference>
<dbReference type="Ensembl" id="ENST00000718330.1">
    <property type="protein sequence ID" value="ENSP00000520767.1"/>
    <property type="gene ID" value="ENSG00000145287.12"/>
</dbReference>
<dbReference type="Ensembl" id="ENST00000718337.1">
    <property type="protein sequence ID" value="ENSP00000520775.1"/>
    <property type="gene ID" value="ENSG00000145287.12"/>
</dbReference>
<dbReference type="Ensembl" id="ENST00000718338.1">
    <property type="protein sequence ID" value="ENSP00000520776.1"/>
    <property type="gene ID" value="ENSG00000145287.12"/>
</dbReference>
<dbReference type="Ensembl" id="ENST00000718339.1">
    <property type="protein sequence ID" value="ENSP00000520777.1"/>
    <property type="gene ID" value="ENSG00000145287.12"/>
</dbReference>
<dbReference type="GeneID" id="51316"/>
<dbReference type="KEGG" id="hsa:51316"/>
<dbReference type="MANE-Select" id="ENST00000311507.9">
    <property type="protein sequence ID" value="ENSP00000309509.4"/>
    <property type="RefSeq nucleotide sequence ID" value="NM_016619.3"/>
    <property type="RefSeq protein sequence ID" value="NP_057703.1"/>
</dbReference>
<dbReference type="AGR" id="HGNC:19254"/>
<dbReference type="CTD" id="51316"/>
<dbReference type="DisGeNET" id="51316"/>
<dbReference type="GeneCards" id="PLAC8"/>
<dbReference type="HGNC" id="HGNC:19254">
    <property type="gene designation" value="PLAC8"/>
</dbReference>
<dbReference type="HPA" id="ENSG00000145287">
    <property type="expression patterns" value="Tissue enhanced (bone marrow, intestine, lymphoid tissue)"/>
</dbReference>
<dbReference type="MIM" id="607515">
    <property type="type" value="gene"/>
</dbReference>
<dbReference type="neXtProt" id="NX_Q9NZF1"/>
<dbReference type="OpenTargets" id="ENSG00000145287"/>
<dbReference type="PharmGKB" id="PA134950814"/>
<dbReference type="VEuPathDB" id="HostDB:ENSG00000145287"/>
<dbReference type="eggNOG" id="ENOG502S3TI">
    <property type="taxonomic scope" value="Eukaryota"/>
</dbReference>
<dbReference type="GeneTree" id="ENSGT00940000157329"/>
<dbReference type="HOGENOM" id="CLU_083147_5_2_1"/>
<dbReference type="InParanoid" id="Q9NZF1"/>
<dbReference type="OMA" id="YLATLCC"/>
<dbReference type="OrthoDB" id="1045822at2759"/>
<dbReference type="PAN-GO" id="Q9NZF1">
    <property type="GO annotations" value="1 GO annotation based on evolutionary models"/>
</dbReference>
<dbReference type="PhylomeDB" id="Q9NZF1"/>
<dbReference type="TreeFam" id="TF330308"/>
<dbReference type="PathwayCommons" id="Q9NZF1"/>
<dbReference type="Reactome" id="R-HSA-6798695">
    <property type="pathway name" value="Neutrophil degranulation"/>
</dbReference>
<dbReference type="Reactome" id="R-HSA-9830364">
    <property type="pathway name" value="Formation of the nephric duct"/>
</dbReference>
<dbReference type="SignaLink" id="Q9NZF1"/>
<dbReference type="BioGRID-ORCS" id="51316">
    <property type="hits" value="15 hits in 1144 CRISPR screens"/>
</dbReference>
<dbReference type="ChiTaRS" id="PLAC8">
    <property type="organism name" value="human"/>
</dbReference>
<dbReference type="GenomeRNAi" id="51316"/>
<dbReference type="Pharos" id="Q9NZF1">
    <property type="development level" value="Tbio"/>
</dbReference>
<dbReference type="PRO" id="PR:Q9NZF1"/>
<dbReference type="Proteomes" id="UP000005640">
    <property type="component" value="Chromosome 4"/>
</dbReference>
<dbReference type="RNAct" id="Q9NZF1">
    <property type="molecule type" value="protein"/>
</dbReference>
<dbReference type="Bgee" id="ENSG00000145287">
    <property type="expression patterns" value="Expressed in bronchial epithelial cell and 147 other cell types or tissues"/>
</dbReference>
<dbReference type="ExpressionAtlas" id="Q9NZF1">
    <property type="expression patterns" value="baseline and differential"/>
</dbReference>
<dbReference type="GO" id="GO:0035578">
    <property type="term" value="C:azurophil granule lumen"/>
    <property type="evidence" value="ECO:0000304"/>
    <property type="project" value="Reactome"/>
</dbReference>
<dbReference type="GO" id="GO:0005576">
    <property type="term" value="C:extracellular region"/>
    <property type="evidence" value="ECO:0000304"/>
    <property type="project" value="Reactome"/>
</dbReference>
<dbReference type="GO" id="GO:0003682">
    <property type="term" value="F:chromatin binding"/>
    <property type="evidence" value="ECO:0007669"/>
    <property type="project" value="Ensembl"/>
</dbReference>
<dbReference type="GO" id="GO:0050873">
    <property type="term" value="P:brown fat cell differentiation"/>
    <property type="evidence" value="ECO:0007669"/>
    <property type="project" value="Ensembl"/>
</dbReference>
<dbReference type="GO" id="GO:0042742">
    <property type="term" value="P:defense response to bacterium"/>
    <property type="evidence" value="ECO:0007669"/>
    <property type="project" value="Ensembl"/>
</dbReference>
<dbReference type="GO" id="GO:0043066">
    <property type="term" value="P:negative regulation of apoptotic process"/>
    <property type="evidence" value="ECO:0007669"/>
    <property type="project" value="Ensembl"/>
</dbReference>
<dbReference type="GO" id="GO:0040015">
    <property type="term" value="P:negative regulation of multicellular organism growth"/>
    <property type="evidence" value="ECO:0007669"/>
    <property type="project" value="Ensembl"/>
</dbReference>
<dbReference type="GO" id="GO:0008284">
    <property type="term" value="P:positive regulation of cell population proliferation"/>
    <property type="evidence" value="ECO:0007669"/>
    <property type="project" value="Ensembl"/>
</dbReference>
<dbReference type="GO" id="GO:0120162">
    <property type="term" value="P:positive regulation of cold-induced thermogenesis"/>
    <property type="evidence" value="ECO:0000250"/>
    <property type="project" value="YuBioLab"/>
</dbReference>
<dbReference type="GO" id="GO:0045944">
    <property type="term" value="P:positive regulation of transcription by RNA polymerase II"/>
    <property type="evidence" value="ECO:0000318"/>
    <property type="project" value="GO_Central"/>
</dbReference>
<dbReference type="GO" id="GO:0009409">
    <property type="term" value="P:response to cold"/>
    <property type="evidence" value="ECO:0007669"/>
    <property type="project" value="Ensembl"/>
</dbReference>
<dbReference type="GO" id="GO:0006366">
    <property type="term" value="P:transcription by RNA polymerase II"/>
    <property type="evidence" value="ECO:0007669"/>
    <property type="project" value="Ensembl"/>
</dbReference>
<dbReference type="InterPro" id="IPR006461">
    <property type="entry name" value="PLAC_motif_containing"/>
</dbReference>
<dbReference type="NCBIfam" id="TIGR01571">
    <property type="entry name" value="A_thal_Cys_rich"/>
    <property type="match status" value="1"/>
</dbReference>
<dbReference type="PANTHER" id="PTHR15907">
    <property type="entry name" value="DUF614 FAMILY PROTEIN-RELATED"/>
    <property type="match status" value="1"/>
</dbReference>
<dbReference type="Pfam" id="PF04749">
    <property type="entry name" value="PLAC8"/>
    <property type="match status" value="1"/>
</dbReference>
<proteinExistence type="evidence at protein level"/>
<feature type="chain" id="PRO_0000186092" description="Placenta-specific gene 8 protein">
    <location>
        <begin position="1"/>
        <end position="115"/>
    </location>
</feature>
<comment type="tissue specificity">
    <text>Expressed at high levels in plasmacytoid dendritic cells. High expression in spleen, lymph nodes, peripheral blood leukocytes, and bone marrow, with lower expression in thymus, appendix, and fetal liver.</text>
</comment>
<comment type="similarity">
    <text evidence="1">Belongs to the cornifelin family.</text>
</comment>
<keyword id="KW-1267">Proteomics identification</keyword>
<keyword id="KW-1185">Reference proteome</keyword>
<organism>
    <name type="scientific">Homo sapiens</name>
    <name type="common">Human</name>
    <dbReference type="NCBI Taxonomy" id="9606"/>
    <lineage>
        <taxon>Eukaryota</taxon>
        <taxon>Metazoa</taxon>
        <taxon>Chordata</taxon>
        <taxon>Craniata</taxon>
        <taxon>Vertebrata</taxon>
        <taxon>Euteleostomi</taxon>
        <taxon>Mammalia</taxon>
        <taxon>Eutheria</taxon>
        <taxon>Euarchontoglires</taxon>
        <taxon>Primates</taxon>
        <taxon>Haplorrhini</taxon>
        <taxon>Catarrhini</taxon>
        <taxon>Hominidae</taxon>
        <taxon>Homo</taxon>
    </lineage>
</organism>
<sequence>MQAQAPVVVVTQPGVGPGPAPQNSNWQTGMCDCFSDCGVCLCGTFCFPCLGCQVAADMNECCLCGTSVAMRTLYRTRYGIPGSICDDYMATLCCPHCTLCQIKRDINRRRAMRTF</sequence>
<accession>Q9NZF1</accession>
<accession>C1K3N2</accession>
<name>PLAC8_HUMAN</name>
<evidence type="ECO:0000305" key="1"/>
<protein>
    <recommendedName>
        <fullName>Placenta-specific gene 8 protein</fullName>
    </recommendedName>
    <alternativeName>
        <fullName>Protein C15</fullName>
    </alternativeName>
</protein>
<reference key="1">
    <citation type="journal article" date="2002" name="Blood">
        <title>Subtractive hybridization reveals the expression of immunoglobulin like transcript 7, Eph-B1, granzyme B, and 3 novel transcripts in human plasmacytoid dendritic cells.</title>
        <authorList>
            <person name="Rissoan M.-C."/>
            <person name="Duhen T."/>
            <person name="Bridon J.-M."/>
            <person name="Bendriss-Vermare N."/>
            <person name="Peronne C."/>
            <person name="de Saint-Vis B.M."/>
            <person name="Briere F."/>
            <person name="Bates E.E.M."/>
        </authorList>
    </citation>
    <scope>NUCLEOTIDE SEQUENCE [MRNA]</scope>
    <source>
        <tissue>Plasmacytoid dendritic cell</tissue>
    </source>
</reference>
<reference key="2">
    <citation type="submission" date="2009-02" db="EMBL/GenBank/DDBJ databases">
        <authorList>
            <person name="Guan W.J."/>
            <person name="Ma Y.H."/>
            <person name="Yu L.L."/>
        </authorList>
    </citation>
    <scope>NUCLEOTIDE SEQUENCE [MRNA]</scope>
    <source>
        <tissue>Placenta</tissue>
    </source>
</reference>
<reference key="3">
    <citation type="journal article" date="2000" name="Genome Res.">
        <title>Cloning and functional analysis of cDNAs with open reading frames for 300 previously undefined genes expressed in CD34+ hematopoietic stem/progenitor cells.</title>
        <authorList>
            <person name="Zhang Q.-H."/>
            <person name="Ye M."/>
            <person name="Wu X.-Y."/>
            <person name="Ren S.-X."/>
            <person name="Zhao M."/>
            <person name="Zhao C.-J."/>
            <person name="Fu G."/>
            <person name="Shen Y."/>
            <person name="Fan H.-Y."/>
            <person name="Lu G."/>
            <person name="Zhong M."/>
            <person name="Xu X.-R."/>
            <person name="Han Z.-G."/>
            <person name="Zhang J.-W."/>
            <person name="Tao J."/>
            <person name="Huang Q.-H."/>
            <person name="Zhou J."/>
            <person name="Hu G.-X."/>
            <person name="Gu J."/>
            <person name="Chen S.-J."/>
            <person name="Chen Z."/>
        </authorList>
    </citation>
    <scope>NUCLEOTIDE SEQUENCE [LARGE SCALE MRNA]</scope>
    <source>
        <tissue>Bone marrow</tissue>
    </source>
</reference>
<reference key="4">
    <citation type="submission" date="2005-07" db="EMBL/GenBank/DDBJ databases">
        <authorList>
            <person name="Mural R.J."/>
            <person name="Istrail S."/>
            <person name="Sutton G.G."/>
            <person name="Florea L."/>
            <person name="Halpern A.L."/>
            <person name="Mobarry C.M."/>
            <person name="Lippert R."/>
            <person name="Walenz B."/>
            <person name="Shatkay H."/>
            <person name="Dew I."/>
            <person name="Miller J.R."/>
            <person name="Flanigan M.J."/>
            <person name="Edwards N.J."/>
            <person name="Bolanos R."/>
            <person name="Fasulo D."/>
            <person name="Halldorsson B.V."/>
            <person name="Hannenhalli S."/>
            <person name="Turner R."/>
            <person name="Yooseph S."/>
            <person name="Lu F."/>
            <person name="Nusskern D.R."/>
            <person name="Shue B.C."/>
            <person name="Zheng X.H."/>
            <person name="Zhong F."/>
            <person name="Delcher A.L."/>
            <person name="Huson D.H."/>
            <person name="Kravitz S.A."/>
            <person name="Mouchard L."/>
            <person name="Reinert K."/>
            <person name="Remington K.A."/>
            <person name="Clark A.G."/>
            <person name="Waterman M.S."/>
            <person name="Eichler E.E."/>
            <person name="Adams M.D."/>
            <person name="Hunkapiller M.W."/>
            <person name="Myers E.W."/>
            <person name="Venter J.C."/>
        </authorList>
    </citation>
    <scope>NUCLEOTIDE SEQUENCE [LARGE SCALE GENOMIC DNA]</scope>
</reference>